<organism>
    <name type="scientific">Staphylococcus aureus (strain bovine RF122 / ET3-1)</name>
    <dbReference type="NCBI Taxonomy" id="273036"/>
    <lineage>
        <taxon>Bacteria</taxon>
        <taxon>Bacillati</taxon>
        <taxon>Bacillota</taxon>
        <taxon>Bacilli</taxon>
        <taxon>Bacillales</taxon>
        <taxon>Staphylococcaceae</taxon>
        <taxon>Staphylococcus</taxon>
    </lineage>
</organism>
<sequence>MKVTDVRLRKIQTDGRMKALVSITLDEAFVIHDLRVIEGNSGLFVAMPSKRTPDGEFRDIAHPINSDMRQEIQDAVMKVYDETDEVVPDKNATSEDSEEA</sequence>
<keyword id="KW-0131">Cell cycle</keyword>
<keyword id="KW-0132">Cell division</keyword>
<keyword id="KW-0717">Septation</keyword>
<protein>
    <recommendedName>
        <fullName evidence="1">Putative septation protein SpoVG</fullName>
    </recommendedName>
</protein>
<comment type="function">
    <text evidence="1">Could be involved in septation.</text>
</comment>
<comment type="similarity">
    <text evidence="1">Belongs to the SpoVG family.</text>
</comment>
<feature type="chain" id="PRO_1000062437" description="Putative septation protein SpoVG">
    <location>
        <begin position="1"/>
        <end position="100"/>
    </location>
</feature>
<name>SP5G_STAAB</name>
<evidence type="ECO:0000255" key="1">
    <source>
        <dbReference type="HAMAP-Rule" id="MF_00819"/>
    </source>
</evidence>
<gene>
    <name evidence="1" type="primary">spoVG</name>
    <name type="ordered locus">SAB0447</name>
</gene>
<accession>Q2YVU7</accession>
<dbReference type="EMBL" id="AJ938182">
    <property type="protein sequence ID" value="CAI80135.1"/>
    <property type="molecule type" value="Genomic_DNA"/>
</dbReference>
<dbReference type="RefSeq" id="WP_000868999.1">
    <property type="nucleotide sequence ID" value="NC_007622.1"/>
</dbReference>
<dbReference type="SMR" id="Q2YVU7"/>
<dbReference type="KEGG" id="sab:SAB0447"/>
<dbReference type="HOGENOM" id="CLU_103669_2_1_9"/>
<dbReference type="GO" id="GO:0000917">
    <property type="term" value="P:division septum assembly"/>
    <property type="evidence" value="ECO:0007669"/>
    <property type="project" value="UniProtKB-KW"/>
</dbReference>
<dbReference type="GO" id="GO:0030435">
    <property type="term" value="P:sporulation resulting in formation of a cellular spore"/>
    <property type="evidence" value="ECO:0007669"/>
    <property type="project" value="InterPro"/>
</dbReference>
<dbReference type="Gene3D" id="3.30.1120.40">
    <property type="entry name" value="Stage V sporulation protein G"/>
    <property type="match status" value="1"/>
</dbReference>
<dbReference type="HAMAP" id="MF_00819">
    <property type="entry name" value="SpoVG"/>
    <property type="match status" value="1"/>
</dbReference>
<dbReference type="InterPro" id="IPR007170">
    <property type="entry name" value="SpoVG"/>
</dbReference>
<dbReference type="InterPro" id="IPR036751">
    <property type="entry name" value="SpoVG_sf"/>
</dbReference>
<dbReference type="NCBIfam" id="NF009749">
    <property type="entry name" value="PRK13259.1"/>
    <property type="match status" value="1"/>
</dbReference>
<dbReference type="PANTHER" id="PTHR38429">
    <property type="entry name" value="SEPTATION PROTEIN SPOVG-RELATED"/>
    <property type="match status" value="1"/>
</dbReference>
<dbReference type="PANTHER" id="PTHR38429:SF1">
    <property type="entry name" value="SEPTATION PROTEIN SPOVG-RELATED"/>
    <property type="match status" value="1"/>
</dbReference>
<dbReference type="Pfam" id="PF04026">
    <property type="entry name" value="SpoVG"/>
    <property type="match status" value="1"/>
</dbReference>
<dbReference type="SUPFAM" id="SSF160537">
    <property type="entry name" value="SpoVG-like"/>
    <property type="match status" value="1"/>
</dbReference>
<reference key="1">
    <citation type="journal article" date="2007" name="PLoS ONE">
        <title>Molecular correlates of host specialization in Staphylococcus aureus.</title>
        <authorList>
            <person name="Herron-Olson L."/>
            <person name="Fitzgerald J.R."/>
            <person name="Musser J.M."/>
            <person name="Kapur V."/>
        </authorList>
    </citation>
    <scope>NUCLEOTIDE SEQUENCE [LARGE SCALE GENOMIC DNA]</scope>
    <source>
        <strain>bovine RF122 / ET3-1</strain>
    </source>
</reference>
<proteinExistence type="inferred from homology"/>